<organism>
    <name type="scientific">Saccharolobus solfataricus (strain ATCC 35092 / DSM 1617 / JCM 11322 / P2)</name>
    <name type="common">Sulfolobus solfataricus</name>
    <dbReference type="NCBI Taxonomy" id="273057"/>
    <lineage>
        <taxon>Archaea</taxon>
        <taxon>Thermoproteota</taxon>
        <taxon>Thermoprotei</taxon>
        <taxon>Sulfolobales</taxon>
        <taxon>Sulfolobaceae</taxon>
        <taxon>Saccharolobus</taxon>
    </lineage>
</organism>
<comment type="catalytic activity">
    <reaction evidence="1">
        <text>tRNA(Phe) + L-phenylalanine + ATP = L-phenylalanyl-tRNA(Phe) + AMP + diphosphate + H(+)</text>
        <dbReference type="Rhea" id="RHEA:19413"/>
        <dbReference type="Rhea" id="RHEA-COMP:9668"/>
        <dbReference type="Rhea" id="RHEA-COMP:9699"/>
        <dbReference type="ChEBI" id="CHEBI:15378"/>
        <dbReference type="ChEBI" id="CHEBI:30616"/>
        <dbReference type="ChEBI" id="CHEBI:33019"/>
        <dbReference type="ChEBI" id="CHEBI:58095"/>
        <dbReference type="ChEBI" id="CHEBI:78442"/>
        <dbReference type="ChEBI" id="CHEBI:78531"/>
        <dbReference type="ChEBI" id="CHEBI:456215"/>
        <dbReference type="EC" id="6.1.1.20"/>
    </reaction>
</comment>
<comment type="cofactor">
    <cofactor evidence="1">
        <name>Mg(2+)</name>
        <dbReference type="ChEBI" id="CHEBI:18420"/>
    </cofactor>
</comment>
<comment type="subunit">
    <text evidence="1">Tetramer of two alpha and two beta subunits.</text>
</comment>
<comment type="subcellular location">
    <subcellularLocation>
        <location evidence="1">Cytoplasm</location>
    </subcellularLocation>
</comment>
<comment type="similarity">
    <text evidence="1 2">Belongs to the phenylalanyl-tRNA synthetase beta subunit family. Type 2 subfamily.</text>
</comment>
<evidence type="ECO:0000255" key="1">
    <source>
        <dbReference type="HAMAP-Rule" id="MF_00284"/>
    </source>
</evidence>
<evidence type="ECO:0000305" key="2"/>
<sequence>MVTIVLNKYKLLNKIGIGQQKLEDLLFNLKSEIKPVDESNIEIEINADRLDLLSSDGIARAIKGLLEKELGEAKYDITDTEYKLIVDNVRTRPYALAAVIYNAKIDLQELIQFQEKLHSTIGRKRKKVAIGIHDLKKIDSKRIEYREVPLSYKFIPLYEKEELTISEVLEKTEQGKLYGNISISNGVSPAIVQEDGEVLSIPPIINSDKTKLDESTKDLFIDVTGTSFEAVAQTLDIIVSNLAEAGGTIGRVKVIKTDNSFQQSSPLLIHKIQNVREEYANKILGIKISEEEICKHITRMRMNCNVENGIIRVTVPQYRVDIINEIDIVEDIAMSIGYNNLEPSKYISTNYGSYDYLTLLERKMRELSIGAGFVEVFNFVLIKNEKILDSKYVKILNPISEEYNAVRNSLIPILLDFLSKNQHAKFPIRIFETGDVVIYDSSTDTGFRNDKRAAYAIMDNKVSYEDVQAPIHYILKTLGIEVNYKEENNDIFIEGRSASIVYENEKIGVIGEINPDVLIRFGIEYPTVIAELYITEIAKKLNKR</sequence>
<gene>
    <name evidence="1" type="primary">pheT</name>
    <name type="ordered locus">SSO0101</name>
    <name type="ORF">C04_021</name>
</gene>
<name>SYFB_SACS2</name>
<protein>
    <recommendedName>
        <fullName evidence="1">Phenylalanine--tRNA ligase beta subunit</fullName>
        <ecNumber evidence="1">6.1.1.20</ecNumber>
    </recommendedName>
    <alternativeName>
        <fullName evidence="1">Phenylalanyl-tRNA synthetase beta subunit</fullName>
        <shortName evidence="1">PheRS</shortName>
    </alternativeName>
</protein>
<reference key="1">
    <citation type="journal article" date="1996" name="Mol. Microbiol.">
        <title>Organizational characteristics and information content of an archaeal genome: 156 kb of sequence from Sulfolobus solfataricus P2.</title>
        <authorList>
            <person name="Sensen C.W."/>
            <person name="Klenk H.-P."/>
            <person name="Singh R.K."/>
            <person name="Allard G."/>
            <person name="Chan C.C.-Y."/>
            <person name="Liu Q.Y."/>
            <person name="Penny S.L."/>
            <person name="Young F."/>
            <person name="Schenk M.E."/>
            <person name="Gaasterland T."/>
            <person name="Doolittle W.F."/>
            <person name="Ragan M.A."/>
            <person name="Charlebois R.L."/>
        </authorList>
    </citation>
    <scope>NUCLEOTIDE SEQUENCE [GENOMIC DNA]</scope>
    <source>
        <strain>ATCC 35092 / DSM 1617 / JCM 11322 / P2</strain>
    </source>
</reference>
<reference key="2">
    <citation type="journal article" date="2001" name="Proc. Natl. Acad. Sci. U.S.A.">
        <title>The complete genome of the crenarchaeon Sulfolobus solfataricus P2.</title>
        <authorList>
            <person name="She Q."/>
            <person name="Singh R.K."/>
            <person name="Confalonieri F."/>
            <person name="Zivanovic Y."/>
            <person name="Allard G."/>
            <person name="Awayez M.J."/>
            <person name="Chan-Weiher C.C.-Y."/>
            <person name="Clausen I.G."/>
            <person name="Curtis B.A."/>
            <person name="De Moors A."/>
            <person name="Erauso G."/>
            <person name="Fletcher C."/>
            <person name="Gordon P.M.K."/>
            <person name="Heikamp-de Jong I."/>
            <person name="Jeffries A.C."/>
            <person name="Kozera C.J."/>
            <person name="Medina N."/>
            <person name="Peng X."/>
            <person name="Thi-Ngoc H.P."/>
            <person name="Redder P."/>
            <person name="Schenk M.E."/>
            <person name="Theriault C."/>
            <person name="Tolstrup N."/>
            <person name="Charlebois R.L."/>
            <person name="Doolittle W.F."/>
            <person name="Duguet M."/>
            <person name="Gaasterland T."/>
            <person name="Garrett R.A."/>
            <person name="Ragan M.A."/>
            <person name="Sensen C.W."/>
            <person name="Van der Oost J."/>
        </authorList>
    </citation>
    <scope>NUCLEOTIDE SEQUENCE [LARGE SCALE GENOMIC DNA]</scope>
    <source>
        <strain>ATCC 35092 / DSM 1617 / JCM 11322 / P2</strain>
    </source>
</reference>
<accession>P95960</accession>
<feature type="chain" id="PRO_0000127012" description="Phenylalanine--tRNA ligase beta subunit">
    <location>
        <begin position="1"/>
        <end position="544"/>
    </location>
</feature>
<feature type="domain" description="B5" evidence="1">
    <location>
        <begin position="268"/>
        <end position="343"/>
    </location>
</feature>
<feature type="binding site" evidence="1">
    <location>
        <position position="321"/>
    </location>
    <ligand>
        <name>Mg(2+)</name>
        <dbReference type="ChEBI" id="CHEBI:18420"/>
        <note>shared with alpha subunit</note>
    </ligand>
</feature>
<feature type="binding site" evidence="1">
    <location>
        <position position="327"/>
    </location>
    <ligand>
        <name>Mg(2+)</name>
        <dbReference type="ChEBI" id="CHEBI:18420"/>
        <note>shared with alpha subunit</note>
    </ligand>
</feature>
<feature type="binding site" evidence="1">
    <location>
        <position position="330"/>
    </location>
    <ligand>
        <name>Mg(2+)</name>
        <dbReference type="ChEBI" id="CHEBI:18420"/>
        <note>shared with alpha subunit</note>
    </ligand>
</feature>
<feature type="binding site" evidence="1">
    <location>
        <position position="331"/>
    </location>
    <ligand>
        <name>Mg(2+)</name>
        <dbReference type="ChEBI" id="CHEBI:18420"/>
        <note>shared with alpha subunit</note>
    </ligand>
</feature>
<proteinExistence type="inferred from homology"/>
<keyword id="KW-0030">Aminoacyl-tRNA synthetase</keyword>
<keyword id="KW-0067">ATP-binding</keyword>
<keyword id="KW-0963">Cytoplasm</keyword>
<keyword id="KW-0436">Ligase</keyword>
<keyword id="KW-0460">Magnesium</keyword>
<keyword id="KW-0479">Metal-binding</keyword>
<keyword id="KW-0547">Nucleotide-binding</keyword>
<keyword id="KW-0648">Protein biosynthesis</keyword>
<keyword id="KW-1185">Reference proteome</keyword>
<dbReference type="EC" id="6.1.1.20" evidence="1"/>
<dbReference type="EMBL" id="Y08257">
    <property type="protein sequence ID" value="CAA69550.1"/>
    <property type="molecule type" value="Genomic_DNA"/>
</dbReference>
<dbReference type="EMBL" id="AE006641">
    <property type="protein sequence ID" value="AAK40457.1"/>
    <property type="molecule type" value="Genomic_DNA"/>
</dbReference>
<dbReference type="PIR" id="S75388">
    <property type="entry name" value="S75388"/>
</dbReference>
<dbReference type="RefSeq" id="WP_009988917.1">
    <property type="nucleotide sequence ID" value="NC_002754.1"/>
</dbReference>
<dbReference type="SMR" id="P95960"/>
<dbReference type="FunCoup" id="P95960">
    <property type="interactions" value="341"/>
</dbReference>
<dbReference type="STRING" id="273057.SSO0101"/>
<dbReference type="PaxDb" id="273057-SSO0101"/>
<dbReference type="EnsemblBacteria" id="AAK40457">
    <property type="protein sequence ID" value="AAK40457"/>
    <property type="gene ID" value="SSO0101"/>
</dbReference>
<dbReference type="GeneID" id="44129061"/>
<dbReference type="KEGG" id="sso:SSO0101"/>
<dbReference type="PATRIC" id="fig|273057.12.peg.98"/>
<dbReference type="eggNOG" id="arCOG00412">
    <property type="taxonomic scope" value="Archaea"/>
</dbReference>
<dbReference type="HOGENOM" id="CLU_020279_3_0_2"/>
<dbReference type="InParanoid" id="P95960"/>
<dbReference type="PhylomeDB" id="P95960"/>
<dbReference type="Proteomes" id="UP000001974">
    <property type="component" value="Chromosome"/>
</dbReference>
<dbReference type="GO" id="GO:0009328">
    <property type="term" value="C:phenylalanine-tRNA ligase complex"/>
    <property type="evidence" value="ECO:0000318"/>
    <property type="project" value="GO_Central"/>
</dbReference>
<dbReference type="GO" id="GO:0005524">
    <property type="term" value="F:ATP binding"/>
    <property type="evidence" value="ECO:0007669"/>
    <property type="project" value="UniProtKB-UniRule"/>
</dbReference>
<dbReference type="GO" id="GO:0000287">
    <property type="term" value="F:magnesium ion binding"/>
    <property type="evidence" value="ECO:0007669"/>
    <property type="project" value="InterPro"/>
</dbReference>
<dbReference type="GO" id="GO:0004826">
    <property type="term" value="F:phenylalanine-tRNA ligase activity"/>
    <property type="evidence" value="ECO:0007669"/>
    <property type="project" value="UniProtKB-UniRule"/>
</dbReference>
<dbReference type="GO" id="GO:0003723">
    <property type="term" value="F:RNA binding"/>
    <property type="evidence" value="ECO:0007669"/>
    <property type="project" value="InterPro"/>
</dbReference>
<dbReference type="GO" id="GO:0006432">
    <property type="term" value="P:phenylalanyl-tRNA aminoacylation"/>
    <property type="evidence" value="ECO:0000318"/>
    <property type="project" value="GO_Central"/>
</dbReference>
<dbReference type="CDD" id="cd00769">
    <property type="entry name" value="PheRS_beta_core"/>
    <property type="match status" value="1"/>
</dbReference>
<dbReference type="FunFam" id="3.30.56.10:FF:000014">
    <property type="entry name" value="Phenylalanine--tRNA ligase beta subunit"/>
    <property type="match status" value="1"/>
</dbReference>
<dbReference type="FunFam" id="3.50.40.10:FF:000003">
    <property type="entry name" value="Phenylalanine--tRNA ligase beta subunit"/>
    <property type="match status" value="1"/>
</dbReference>
<dbReference type="Gene3D" id="3.30.56.10">
    <property type="match status" value="2"/>
</dbReference>
<dbReference type="Gene3D" id="3.30.930.10">
    <property type="entry name" value="Bira Bifunctional Protein, Domain 2"/>
    <property type="match status" value="1"/>
</dbReference>
<dbReference type="Gene3D" id="3.50.40.10">
    <property type="entry name" value="Phenylalanyl-trna Synthetase, Chain B, domain 3"/>
    <property type="match status" value="1"/>
</dbReference>
<dbReference type="HAMAP" id="MF_00284">
    <property type="entry name" value="Phe_tRNA_synth_beta2"/>
    <property type="match status" value="1"/>
</dbReference>
<dbReference type="InterPro" id="IPR045864">
    <property type="entry name" value="aa-tRNA-synth_II/BPL/LPL"/>
</dbReference>
<dbReference type="InterPro" id="IPR005146">
    <property type="entry name" value="B3/B4_tRNA-bd"/>
</dbReference>
<dbReference type="InterPro" id="IPR009061">
    <property type="entry name" value="DNA-bd_dom_put_sf"/>
</dbReference>
<dbReference type="InterPro" id="IPR045060">
    <property type="entry name" value="Phe-tRNA-ligase_IIc_bsu"/>
</dbReference>
<dbReference type="InterPro" id="IPR004531">
    <property type="entry name" value="Phe-tRNA-synth_IIc_bsu_arc_euk"/>
</dbReference>
<dbReference type="InterPro" id="IPR020825">
    <property type="entry name" value="Phe-tRNA_synthase-like_B3/B4"/>
</dbReference>
<dbReference type="InterPro" id="IPR022918">
    <property type="entry name" value="Phe_tRNA_ligase_beta2_arc"/>
</dbReference>
<dbReference type="InterPro" id="IPR041616">
    <property type="entry name" value="PheRS_beta_core"/>
</dbReference>
<dbReference type="InterPro" id="IPR005147">
    <property type="entry name" value="tRNA_synthase_B5-dom"/>
</dbReference>
<dbReference type="NCBIfam" id="TIGR00471">
    <property type="entry name" value="pheT_arch"/>
    <property type="match status" value="1"/>
</dbReference>
<dbReference type="PANTHER" id="PTHR10947:SF0">
    <property type="entry name" value="PHENYLALANINE--TRNA LIGASE BETA SUBUNIT"/>
    <property type="match status" value="1"/>
</dbReference>
<dbReference type="PANTHER" id="PTHR10947">
    <property type="entry name" value="PHENYLALANYL-TRNA SYNTHETASE BETA CHAIN AND LEUCINE-RICH REPEAT-CONTAINING PROTEIN 47"/>
    <property type="match status" value="1"/>
</dbReference>
<dbReference type="Pfam" id="PF03483">
    <property type="entry name" value="B3_4"/>
    <property type="match status" value="1"/>
</dbReference>
<dbReference type="Pfam" id="PF03484">
    <property type="entry name" value="B5"/>
    <property type="match status" value="1"/>
</dbReference>
<dbReference type="Pfam" id="PF17759">
    <property type="entry name" value="tRNA_synthFbeta"/>
    <property type="match status" value="1"/>
</dbReference>
<dbReference type="SMART" id="SM00873">
    <property type="entry name" value="B3_4"/>
    <property type="match status" value="1"/>
</dbReference>
<dbReference type="SMART" id="SM00874">
    <property type="entry name" value="B5"/>
    <property type="match status" value="1"/>
</dbReference>
<dbReference type="SUPFAM" id="SSF55681">
    <property type="entry name" value="Class II aaRS and biotin synthetases"/>
    <property type="match status" value="1"/>
</dbReference>
<dbReference type="SUPFAM" id="SSF46955">
    <property type="entry name" value="Putative DNA-binding domain"/>
    <property type="match status" value="1"/>
</dbReference>
<dbReference type="PROSITE" id="PS51483">
    <property type="entry name" value="B5"/>
    <property type="match status" value="1"/>
</dbReference>